<gene>
    <name evidence="1" type="primary">hutG</name>
    <name type="ordered locus">spyM18_2148</name>
</gene>
<reference key="1">
    <citation type="journal article" date="2002" name="Proc. Natl. Acad. Sci. U.S.A.">
        <title>Genome sequence and comparative microarray analysis of serotype M18 group A Streptococcus strains associated with acute rheumatic fever outbreaks.</title>
        <authorList>
            <person name="Smoot J.C."/>
            <person name="Barbian K.D."/>
            <person name="Van Gompel J.J."/>
            <person name="Smoot L.M."/>
            <person name="Chaussee M.S."/>
            <person name="Sylva G.L."/>
            <person name="Sturdevant D.E."/>
            <person name="Ricklefs S.M."/>
            <person name="Porcella S.F."/>
            <person name="Parkins L.D."/>
            <person name="Beres S.B."/>
            <person name="Campbell D.S."/>
            <person name="Smith T.M."/>
            <person name="Zhang Q."/>
            <person name="Kapur V."/>
            <person name="Daly J.A."/>
            <person name="Veasy L.G."/>
            <person name="Musser J.M."/>
        </authorList>
    </citation>
    <scope>NUCLEOTIDE SEQUENCE [LARGE SCALE GENOMIC DNA]</scope>
    <source>
        <strain>MGAS8232</strain>
    </source>
</reference>
<comment type="function">
    <text evidence="1">Catalyzes the conversion of N-formimidoyl-L-glutamate to L-glutamate and formamide.</text>
</comment>
<comment type="catalytic activity">
    <reaction evidence="1">
        <text>N-formimidoyl-L-glutamate + H2O = formamide + L-glutamate</text>
        <dbReference type="Rhea" id="RHEA:22492"/>
        <dbReference type="ChEBI" id="CHEBI:15377"/>
        <dbReference type="ChEBI" id="CHEBI:16397"/>
        <dbReference type="ChEBI" id="CHEBI:29985"/>
        <dbReference type="ChEBI" id="CHEBI:58928"/>
        <dbReference type="EC" id="3.5.3.8"/>
    </reaction>
</comment>
<comment type="cofactor">
    <cofactor evidence="1">
        <name>Mn(2+)</name>
        <dbReference type="ChEBI" id="CHEBI:29035"/>
    </cofactor>
    <text evidence="1">Binds 2 manganese ions per subunit.</text>
</comment>
<comment type="pathway">
    <text evidence="1">Amino-acid degradation; L-histidine degradation into L-glutamate; L-glutamate from N-formimidoyl-L-glutamate (hydrolase route): step 1/1.</text>
</comment>
<comment type="similarity">
    <text evidence="1">Belongs to the arginase family.</text>
</comment>
<evidence type="ECO:0000255" key="1">
    <source>
        <dbReference type="HAMAP-Rule" id="MF_00737"/>
    </source>
</evidence>
<keyword id="KW-0369">Histidine metabolism</keyword>
<keyword id="KW-0378">Hydrolase</keyword>
<keyword id="KW-0464">Manganese</keyword>
<keyword id="KW-0479">Metal-binding</keyword>
<feature type="chain" id="PRO_0000173778" description="Formimidoylglutamase">
    <location>
        <begin position="1"/>
        <end position="328"/>
    </location>
</feature>
<feature type="binding site" evidence="1">
    <location>
        <position position="133"/>
    </location>
    <ligand>
        <name>Mn(2+)</name>
        <dbReference type="ChEBI" id="CHEBI:29035"/>
        <label>1</label>
    </ligand>
</feature>
<feature type="binding site" evidence="1">
    <location>
        <position position="159"/>
    </location>
    <ligand>
        <name>Mn(2+)</name>
        <dbReference type="ChEBI" id="CHEBI:29035"/>
        <label>1</label>
    </ligand>
</feature>
<feature type="binding site" evidence="1">
    <location>
        <position position="159"/>
    </location>
    <ligand>
        <name>Mn(2+)</name>
        <dbReference type="ChEBI" id="CHEBI:29035"/>
        <label>2</label>
    </ligand>
</feature>
<feature type="binding site" evidence="1">
    <location>
        <position position="161"/>
    </location>
    <ligand>
        <name>Mn(2+)</name>
        <dbReference type="ChEBI" id="CHEBI:29035"/>
        <label>2</label>
    </ligand>
</feature>
<feature type="binding site" evidence="1">
    <location>
        <position position="163"/>
    </location>
    <ligand>
        <name>Mn(2+)</name>
        <dbReference type="ChEBI" id="CHEBI:29035"/>
        <label>1</label>
    </ligand>
</feature>
<feature type="binding site" evidence="1">
    <location>
        <position position="253"/>
    </location>
    <ligand>
        <name>Mn(2+)</name>
        <dbReference type="ChEBI" id="CHEBI:29035"/>
        <label>1</label>
    </ligand>
</feature>
<feature type="binding site" evidence="1">
    <location>
        <position position="253"/>
    </location>
    <ligand>
        <name>Mn(2+)</name>
        <dbReference type="ChEBI" id="CHEBI:29035"/>
        <label>2</label>
    </ligand>
</feature>
<feature type="binding site" evidence="1">
    <location>
        <position position="255"/>
    </location>
    <ligand>
        <name>Mn(2+)</name>
        <dbReference type="ChEBI" id="CHEBI:29035"/>
        <label>2</label>
    </ligand>
</feature>
<proteinExistence type="inferred from homology"/>
<name>HUTG_STRP8</name>
<organism>
    <name type="scientific">Streptococcus pyogenes serotype M18 (strain MGAS8232)</name>
    <dbReference type="NCBI Taxonomy" id="186103"/>
    <lineage>
        <taxon>Bacteria</taxon>
        <taxon>Bacillati</taxon>
        <taxon>Bacillota</taxon>
        <taxon>Bacilli</taxon>
        <taxon>Lactobacillales</taxon>
        <taxon>Streptococcaceae</taxon>
        <taxon>Streptococcus</taxon>
    </lineage>
</organism>
<sequence length="328" mass="36425">MLEDYYPSTTSYYHGGIDDDLYTAKWGMVMTFLDLNDSSLTPFEGTHFALIGFKSDKGVYINNGRVGAVESPAAIRTQLAKFPWHLGNQVMVYDVGNIDGPNRSLEQLQNSLSKAIKRMCDLNLKPIVLGGGHETAYGHYLGLRQSLSPSDDLAVINMDAHFDLRPYDQTGPNSGTGFRQMFDDAVADKRLFKYFVLGIQEHNNNLFLFDFVAKSKGIQFLTGQDIYQMGHQKVCRAIDRFLEGQERVYLTIDMDCFSVGAAPGVSAIQSLGVDPNLAVLVLQHIAASRKLVGFDVVEVSPPHDIDNHTANLAATFIFYLVQIMAQHS</sequence>
<protein>
    <recommendedName>
        <fullName evidence="1">Formimidoylglutamase</fullName>
        <ecNumber evidence="1">3.5.3.8</ecNumber>
    </recommendedName>
    <alternativeName>
        <fullName evidence="1">Formiminoglutamase</fullName>
    </alternativeName>
    <alternativeName>
        <fullName evidence="1">Formiminoglutamate hydrolase</fullName>
    </alternativeName>
</protein>
<accession>Q8NZ45</accession>
<dbReference type="EC" id="3.5.3.8" evidence="1"/>
<dbReference type="EMBL" id="AE009949">
    <property type="protein sequence ID" value="AAL98597.1"/>
    <property type="molecule type" value="Genomic_DNA"/>
</dbReference>
<dbReference type="RefSeq" id="WP_002991324.1">
    <property type="nucleotide sequence ID" value="NC_003485.1"/>
</dbReference>
<dbReference type="SMR" id="Q8NZ45"/>
<dbReference type="KEGG" id="spm:spyM18_2148"/>
<dbReference type="HOGENOM" id="CLU_039478_2_0_9"/>
<dbReference type="UniPathway" id="UPA00379">
    <property type="reaction ID" value="UER00552"/>
</dbReference>
<dbReference type="GO" id="GO:0008783">
    <property type="term" value="F:agmatinase activity"/>
    <property type="evidence" value="ECO:0007669"/>
    <property type="project" value="TreeGrafter"/>
</dbReference>
<dbReference type="GO" id="GO:0050415">
    <property type="term" value="F:formimidoylglutamase activity"/>
    <property type="evidence" value="ECO:0007669"/>
    <property type="project" value="UniProtKB-UniRule"/>
</dbReference>
<dbReference type="GO" id="GO:0030145">
    <property type="term" value="F:manganese ion binding"/>
    <property type="evidence" value="ECO:0007669"/>
    <property type="project" value="UniProtKB-UniRule"/>
</dbReference>
<dbReference type="GO" id="GO:0019556">
    <property type="term" value="P:L-histidine catabolic process to glutamate and formamide"/>
    <property type="evidence" value="ECO:0007669"/>
    <property type="project" value="UniProtKB-UniPathway"/>
</dbReference>
<dbReference type="GO" id="GO:0019557">
    <property type="term" value="P:L-histidine catabolic process to glutamate and formate"/>
    <property type="evidence" value="ECO:0007669"/>
    <property type="project" value="UniProtKB-UniPathway"/>
</dbReference>
<dbReference type="GO" id="GO:0033389">
    <property type="term" value="P:putrescine biosynthetic process from arginine, via agmatine"/>
    <property type="evidence" value="ECO:0007669"/>
    <property type="project" value="TreeGrafter"/>
</dbReference>
<dbReference type="CDD" id="cd09988">
    <property type="entry name" value="Formimidoylglutamase"/>
    <property type="match status" value="1"/>
</dbReference>
<dbReference type="Gene3D" id="3.40.800.10">
    <property type="entry name" value="Ureohydrolase domain"/>
    <property type="match status" value="1"/>
</dbReference>
<dbReference type="HAMAP" id="MF_00737">
    <property type="entry name" value="Formimidoylglutam"/>
    <property type="match status" value="1"/>
</dbReference>
<dbReference type="InterPro" id="IPR005923">
    <property type="entry name" value="HutG"/>
</dbReference>
<dbReference type="InterPro" id="IPR006035">
    <property type="entry name" value="Ureohydrolase"/>
</dbReference>
<dbReference type="InterPro" id="IPR023696">
    <property type="entry name" value="Ureohydrolase_dom_sf"/>
</dbReference>
<dbReference type="NCBIfam" id="NF010347">
    <property type="entry name" value="PRK13775.1"/>
    <property type="match status" value="1"/>
</dbReference>
<dbReference type="PANTHER" id="PTHR11358">
    <property type="entry name" value="ARGINASE/AGMATINASE"/>
    <property type="match status" value="1"/>
</dbReference>
<dbReference type="PANTHER" id="PTHR11358:SF35">
    <property type="entry name" value="FORMIMIDOYLGLUTAMASE"/>
    <property type="match status" value="1"/>
</dbReference>
<dbReference type="Pfam" id="PF00491">
    <property type="entry name" value="Arginase"/>
    <property type="match status" value="1"/>
</dbReference>
<dbReference type="PIRSF" id="PIRSF036979">
    <property type="entry name" value="Arginase"/>
    <property type="match status" value="1"/>
</dbReference>
<dbReference type="SUPFAM" id="SSF52768">
    <property type="entry name" value="Arginase/deacetylase"/>
    <property type="match status" value="1"/>
</dbReference>
<dbReference type="PROSITE" id="PS51409">
    <property type="entry name" value="ARGINASE_2"/>
    <property type="match status" value="1"/>
</dbReference>